<gene>
    <name evidence="7" type="primary">meng</name>
    <name evidence="4" type="synonym">MP</name>
    <name evidence="7" type="synonym">PKN</name>
    <name evidence="7" type="ORF">CG11221</name>
</gene>
<protein>
    <recommendedName>
        <fullName evidence="5">Serine/threonine-protein kinase meng-po</fullName>
        <shortName evidence="4 7">meng-po</shortName>
        <ecNumber evidence="3">2.7.11.1</ecNumber>
    </recommendedName>
    <alternativeName>
        <fullName evidence="5">SH3-binding kinase homolog</fullName>
    </alternativeName>
</protein>
<sequence length="456" mass="52419">MGTIEKRSFSFRLRRSFGDGGSTNSRNSNNNSSTCTNHNNQKRCSTPLTPTSTSTGRLEVPGAASVSRRSSIYKKPDKNDGGQIHLIPDVELPLMTFADQYNIEKTLAEGCFAKILLCRHRPTNTLVVLKAVHAELTTIKEFQKEFHYNYELSHHHHILSAYAVAFQTMDYYVFAMEHAPYGDLASNIGPNGLHENACKLISEQLSSALGFMHSKNLVHRDLKIENILVFTPDFTRVKLCDFGATTKKGLLVHKVKHTWTSCVPPEQLELIKNERFQCLPVSDSWQFGILLYNILTGNPPWQSADWVKDQSYANFMKYEQRKTTKVPDNFRRFSPRLMRCFRKYLSHDPEDRCKITEVAKYMKDRWVECRISTSKSATLISPTNHDQDSCIYLNQREGRLSGDENKLRFKRMMSTYGLDIPIDQAMVRRRVWDWLSTCDANFDPDVESLHALDLLQ</sequence>
<proteinExistence type="evidence at protein level"/>
<feature type="chain" id="PRO_0000444433" description="Serine/threonine-protein kinase meng-po" evidence="5">
    <location>
        <begin position="1"/>
        <end position="456"/>
    </location>
</feature>
<feature type="domain" description="Protein kinase" evidence="1">
    <location>
        <begin position="101"/>
        <end position="367"/>
    </location>
</feature>
<feature type="region of interest" description="Disordered" evidence="2">
    <location>
        <begin position="15"/>
        <end position="78"/>
    </location>
</feature>
<feature type="compositionally biased region" description="Low complexity" evidence="2">
    <location>
        <begin position="22"/>
        <end position="55"/>
    </location>
</feature>
<feature type="active site" description="Proton acceptor" evidence="1">
    <location>
        <position position="221"/>
    </location>
</feature>
<feature type="binding site" evidence="1">
    <location>
        <begin position="107"/>
        <end position="115"/>
    </location>
    <ligand>
        <name>ATP</name>
        <dbReference type="ChEBI" id="CHEBI:30616"/>
    </ligand>
</feature>
<feature type="binding site" evidence="1">
    <location>
        <position position="130"/>
    </location>
    <ligand>
        <name>ATP</name>
        <dbReference type="ChEBI" id="CHEBI:30616"/>
    </ligand>
</feature>
<feature type="modified residue" description="Phosphoserine; by PKA" evidence="3">
    <location>
        <position position="334"/>
    </location>
</feature>
<feature type="mutagenesis site" description="Abolishes phosphorylation. Reduces kinase activity." evidence="3">
    <original>S</original>
    <variation>A</variation>
    <location>
        <position position="334"/>
    </location>
</feature>
<name>SBKH_DROME</name>
<organism evidence="8">
    <name type="scientific">Drosophila melanogaster</name>
    <name type="common">Fruit fly</name>
    <dbReference type="NCBI Taxonomy" id="7227"/>
    <lineage>
        <taxon>Eukaryota</taxon>
        <taxon>Metazoa</taxon>
        <taxon>Ecdysozoa</taxon>
        <taxon>Arthropoda</taxon>
        <taxon>Hexapoda</taxon>
        <taxon>Insecta</taxon>
        <taxon>Pterygota</taxon>
        <taxon>Neoptera</taxon>
        <taxon>Endopterygota</taxon>
        <taxon>Diptera</taxon>
        <taxon>Brachycera</taxon>
        <taxon>Muscomorpha</taxon>
        <taxon>Ephydroidea</taxon>
        <taxon>Drosophilidae</taxon>
        <taxon>Drosophila</taxon>
        <taxon>Sophophora</taxon>
    </lineage>
</organism>
<keyword id="KW-0067">ATP-binding</keyword>
<keyword id="KW-0418">Kinase</keyword>
<keyword id="KW-0460">Magnesium</keyword>
<keyword id="KW-0479">Metal-binding</keyword>
<keyword id="KW-0547">Nucleotide-binding</keyword>
<keyword id="KW-0597">Phosphoprotein</keyword>
<keyword id="KW-1185">Reference proteome</keyword>
<keyword id="KW-0723">Serine/threonine-protein kinase</keyword>
<keyword id="KW-0808">Transferase</keyword>
<accession>Q9VM90</accession>
<evidence type="ECO:0000255" key="1">
    <source>
        <dbReference type="PROSITE-ProRule" id="PRU00159"/>
    </source>
</evidence>
<evidence type="ECO:0000256" key="2">
    <source>
        <dbReference type="SAM" id="MobiDB-lite"/>
    </source>
</evidence>
<evidence type="ECO:0000269" key="3">
    <source>
    </source>
</evidence>
<evidence type="ECO:0000303" key="4">
    <source>
    </source>
</evidence>
<evidence type="ECO:0000305" key="5"/>
<evidence type="ECO:0000312" key="6">
    <source>
        <dbReference type="EMBL" id="AAL49219.1"/>
    </source>
</evidence>
<evidence type="ECO:0000312" key="7">
    <source>
        <dbReference type="FlyBase" id="FBgn0031855"/>
    </source>
</evidence>
<evidence type="ECO:0000312" key="8">
    <source>
        <dbReference type="Proteomes" id="UP000000803"/>
    </source>
</evidence>
<dbReference type="EC" id="2.7.11.1" evidence="3"/>
<dbReference type="EMBL" id="AE014134">
    <property type="protein sequence ID" value="AAF52433.1"/>
    <property type="molecule type" value="Genomic_DNA"/>
</dbReference>
<dbReference type="EMBL" id="AE014134">
    <property type="protein sequence ID" value="AHN54203.1"/>
    <property type="molecule type" value="Genomic_DNA"/>
</dbReference>
<dbReference type="EMBL" id="AY071597">
    <property type="protein sequence ID" value="AAL49219.1"/>
    <property type="molecule type" value="mRNA"/>
</dbReference>
<dbReference type="RefSeq" id="NP_001285688.1">
    <property type="nucleotide sequence ID" value="NM_001298759.1"/>
</dbReference>
<dbReference type="RefSeq" id="NP_609070.1">
    <property type="nucleotide sequence ID" value="NM_135226.3"/>
</dbReference>
<dbReference type="SMR" id="Q9VM90"/>
<dbReference type="FunCoup" id="Q9VM90">
    <property type="interactions" value="2"/>
</dbReference>
<dbReference type="STRING" id="7227.FBpp0308344"/>
<dbReference type="iPTMnet" id="Q9VM90"/>
<dbReference type="PaxDb" id="7227-FBpp0078933"/>
<dbReference type="DNASU" id="33948"/>
<dbReference type="EnsemblMetazoa" id="FBtr0079303">
    <property type="protein sequence ID" value="FBpp0078933"/>
    <property type="gene ID" value="FBgn0031855"/>
</dbReference>
<dbReference type="EnsemblMetazoa" id="FBtr0339237">
    <property type="protein sequence ID" value="FBpp0308344"/>
    <property type="gene ID" value="FBgn0031855"/>
</dbReference>
<dbReference type="GeneID" id="33948"/>
<dbReference type="KEGG" id="dme:Dmel_CG11221"/>
<dbReference type="UCSC" id="CG11221-RA">
    <property type="organism name" value="d. melanogaster"/>
</dbReference>
<dbReference type="AGR" id="FB:FBgn0031855"/>
<dbReference type="CTD" id="104192"/>
<dbReference type="FlyBase" id="FBgn0031855">
    <property type="gene designation" value="meng"/>
</dbReference>
<dbReference type="VEuPathDB" id="VectorBase:FBgn0031855"/>
<dbReference type="eggNOG" id="KOG1345">
    <property type="taxonomic scope" value="Eukaryota"/>
</dbReference>
<dbReference type="GeneTree" id="ENSGT00940000174103"/>
<dbReference type="HOGENOM" id="CLU_000288_10_3_1"/>
<dbReference type="InParanoid" id="Q9VM90"/>
<dbReference type="OMA" id="HETACKL"/>
<dbReference type="OrthoDB" id="6513151at2759"/>
<dbReference type="PhylomeDB" id="Q9VM90"/>
<dbReference type="BioGRID-ORCS" id="33948">
    <property type="hits" value="0 hits in 3 CRISPR screens"/>
</dbReference>
<dbReference type="ChiTaRS" id="Pkn">
    <property type="organism name" value="fly"/>
</dbReference>
<dbReference type="GenomeRNAi" id="33948"/>
<dbReference type="PRO" id="PR:Q9VM90"/>
<dbReference type="Proteomes" id="UP000000803">
    <property type="component" value="Chromosome 2L"/>
</dbReference>
<dbReference type="Bgee" id="FBgn0031855">
    <property type="expression patterns" value="Expressed in medullary tangential neuron Mt1 (Drosophila) in brain and 96 other cell types or tissues"/>
</dbReference>
<dbReference type="GO" id="GO:0005524">
    <property type="term" value="F:ATP binding"/>
    <property type="evidence" value="ECO:0007669"/>
    <property type="project" value="UniProtKB-KW"/>
</dbReference>
<dbReference type="GO" id="GO:0046872">
    <property type="term" value="F:metal ion binding"/>
    <property type="evidence" value="ECO:0007669"/>
    <property type="project" value="UniProtKB-KW"/>
</dbReference>
<dbReference type="GO" id="GO:0106310">
    <property type="term" value="F:protein serine kinase activity"/>
    <property type="evidence" value="ECO:0007669"/>
    <property type="project" value="RHEA"/>
</dbReference>
<dbReference type="GO" id="GO:0004674">
    <property type="term" value="F:protein serine/threonine kinase activity"/>
    <property type="evidence" value="ECO:0000318"/>
    <property type="project" value="GO_Central"/>
</dbReference>
<dbReference type="GO" id="GO:0007616">
    <property type="term" value="P:long-term memory"/>
    <property type="evidence" value="ECO:0000315"/>
    <property type="project" value="UniProtKB"/>
</dbReference>
<dbReference type="GO" id="GO:0072375">
    <property type="term" value="P:medium-term memory"/>
    <property type="evidence" value="ECO:0000315"/>
    <property type="project" value="UniProtKB"/>
</dbReference>
<dbReference type="GO" id="GO:0010628">
    <property type="term" value="P:positive regulation of gene expression"/>
    <property type="evidence" value="ECO:0000315"/>
    <property type="project" value="UniProtKB"/>
</dbReference>
<dbReference type="GO" id="GO:0007614">
    <property type="term" value="P:short-term memory"/>
    <property type="evidence" value="ECO:0000315"/>
    <property type="project" value="UniProtKB"/>
</dbReference>
<dbReference type="CDD" id="cd13987">
    <property type="entry name" value="STKc_SBK1"/>
    <property type="match status" value="1"/>
</dbReference>
<dbReference type="FunFam" id="1.10.510.10:FF:000500">
    <property type="entry name" value="serine/threonine-protein kinase SBK1"/>
    <property type="match status" value="1"/>
</dbReference>
<dbReference type="Gene3D" id="1.10.510.10">
    <property type="entry name" value="Transferase(Phosphotransferase) domain 1"/>
    <property type="match status" value="1"/>
</dbReference>
<dbReference type="InterPro" id="IPR011009">
    <property type="entry name" value="Kinase-like_dom_sf"/>
</dbReference>
<dbReference type="InterPro" id="IPR000719">
    <property type="entry name" value="Prot_kinase_dom"/>
</dbReference>
<dbReference type="InterPro" id="IPR008271">
    <property type="entry name" value="Ser/Thr_kinase_AS"/>
</dbReference>
<dbReference type="PANTHER" id="PTHR24359">
    <property type="entry name" value="SERINE/THREONINE-PROTEIN KINASE SBK1"/>
    <property type="match status" value="1"/>
</dbReference>
<dbReference type="PANTHER" id="PTHR24359:SF26">
    <property type="entry name" value="SERINE_THREONINE-PROTEIN KINASE MENG-PO"/>
    <property type="match status" value="1"/>
</dbReference>
<dbReference type="Pfam" id="PF00069">
    <property type="entry name" value="Pkinase"/>
    <property type="match status" value="1"/>
</dbReference>
<dbReference type="SMART" id="SM00220">
    <property type="entry name" value="S_TKc"/>
    <property type="match status" value="1"/>
</dbReference>
<dbReference type="SUPFAM" id="SSF56112">
    <property type="entry name" value="Protein kinase-like (PK-like)"/>
    <property type="match status" value="1"/>
</dbReference>
<dbReference type="PROSITE" id="PS50011">
    <property type="entry name" value="PROTEIN_KINASE_DOM"/>
    <property type="match status" value="1"/>
</dbReference>
<dbReference type="PROSITE" id="PS00108">
    <property type="entry name" value="PROTEIN_KINASE_ST"/>
    <property type="match status" value="1"/>
</dbReference>
<reference evidence="8" key="1">
    <citation type="journal article" date="2000" name="Science">
        <title>The genome sequence of Drosophila melanogaster.</title>
        <authorList>
            <person name="Adams M.D."/>
            <person name="Celniker S.E."/>
            <person name="Holt R.A."/>
            <person name="Evans C.A."/>
            <person name="Gocayne J.D."/>
            <person name="Amanatides P.G."/>
            <person name="Scherer S.E."/>
            <person name="Li P.W."/>
            <person name="Hoskins R.A."/>
            <person name="Galle R.F."/>
            <person name="George R.A."/>
            <person name="Lewis S.E."/>
            <person name="Richards S."/>
            <person name="Ashburner M."/>
            <person name="Henderson S.N."/>
            <person name="Sutton G.G."/>
            <person name="Wortman J.R."/>
            <person name="Yandell M.D."/>
            <person name="Zhang Q."/>
            <person name="Chen L.X."/>
            <person name="Brandon R.C."/>
            <person name="Rogers Y.-H.C."/>
            <person name="Blazej R.G."/>
            <person name="Champe M."/>
            <person name="Pfeiffer B.D."/>
            <person name="Wan K.H."/>
            <person name="Doyle C."/>
            <person name="Baxter E.G."/>
            <person name="Helt G."/>
            <person name="Nelson C.R."/>
            <person name="Miklos G.L.G."/>
            <person name="Abril J.F."/>
            <person name="Agbayani A."/>
            <person name="An H.-J."/>
            <person name="Andrews-Pfannkoch C."/>
            <person name="Baldwin D."/>
            <person name="Ballew R.M."/>
            <person name="Basu A."/>
            <person name="Baxendale J."/>
            <person name="Bayraktaroglu L."/>
            <person name="Beasley E.M."/>
            <person name="Beeson K.Y."/>
            <person name="Benos P.V."/>
            <person name="Berman B.P."/>
            <person name="Bhandari D."/>
            <person name="Bolshakov S."/>
            <person name="Borkova D."/>
            <person name="Botchan M.R."/>
            <person name="Bouck J."/>
            <person name="Brokstein P."/>
            <person name="Brottier P."/>
            <person name="Burtis K.C."/>
            <person name="Busam D.A."/>
            <person name="Butler H."/>
            <person name="Cadieu E."/>
            <person name="Center A."/>
            <person name="Chandra I."/>
            <person name="Cherry J.M."/>
            <person name="Cawley S."/>
            <person name="Dahlke C."/>
            <person name="Davenport L.B."/>
            <person name="Davies P."/>
            <person name="de Pablos B."/>
            <person name="Delcher A."/>
            <person name="Deng Z."/>
            <person name="Mays A.D."/>
            <person name="Dew I."/>
            <person name="Dietz S.M."/>
            <person name="Dodson K."/>
            <person name="Doup L.E."/>
            <person name="Downes M."/>
            <person name="Dugan-Rocha S."/>
            <person name="Dunkov B.C."/>
            <person name="Dunn P."/>
            <person name="Durbin K.J."/>
            <person name="Evangelista C.C."/>
            <person name="Ferraz C."/>
            <person name="Ferriera S."/>
            <person name="Fleischmann W."/>
            <person name="Fosler C."/>
            <person name="Gabrielian A.E."/>
            <person name="Garg N.S."/>
            <person name="Gelbart W.M."/>
            <person name="Glasser K."/>
            <person name="Glodek A."/>
            <person name="Gong F."/>
            <person name="Gorrell J.H."/>
            <person name="Gu Z."/>
            <person name="Guan P."/>
            <person name="Harris M."/>
            <person name="Harris N.L."/>
            <person name="Harvey D.A."/>
            <person name="Heiman T.J."/>
            <person name="Hernandez J.R."/>
            <person name="Houck J."/>
            <person name="Hostin D."/>
            <person name="Houston K.A."/>
            <person name="Howland T.J."/>
            <person name="Wei M.-H."/>
            <person name="Ibegwam C."/>
            <person name="Jalali M."/>
            <person name="Kalush F."/>
            <person name="Karpen G.H."/>
            <person name="Ke Z."/>
            <person name="Kennison J.A."/>
            <person name="Ketchum K.A."/>
            <person name="Kimmel B.E."/>
            <person name="Kodira C.D."/>
            <person name="Kraft C.L."/>
            <person name="Kravitz S."/>
            <person name="Kulp D."/>
            <person name="Lai Z."/>
            <person name="Lasko P."/>
            <person name="Lei Y."/>
            <person name="Levitsky A.A."/>
            <person name="Li J.H."/>
            <person name="Li Z."/>
            <person name="Liang Y."/>
            <person name="Lin X."/>
            <person name="Liu X."/>
            <person name="Mattei B."/>
            <person name="McIntosh T.C."/>
            <person name="McLeod M.P."/>
            <person name="McPherson D."/>
            <person name="Merkulov G."/>
            <person name="Milshina N.V."/>
            <person name="Mobarry C."/>
            <person name="Morris J."/>
            <person name="Moshrefi A."/>
            <person name="Mount S.M."/>
            <person name="Moy M."/>
            <person name="Murphy B."/>
            <person name="Murphy L."/>
            <person name="Muzny D.M."/>
            <person name="Nelson D.L."/>
            <person name="Nelson D.R."/>
            <person name="Nelson K.A."/>
            <person name="Nixon K."/>
            <person name="Nusskern D.R."/>
            <person name="Pacleb J.M."/>
            <person name="Palazzolo M."/>
            <person name="Pittman G.S."/>
            <person name="Pan S."/>
            <person name="Pollard J."/>
            <person name="Puri V."/>
            <person name="Reese M.G."/>
            <person name="Reinert K."/>
            <person name="Remington K."/>
            <person name="Saunders R.D.C."/>
            <person name="Scheeler F."/>
            <person name="Shen H."/>
            <person name="Shue B.C."/>
            <person name="Siden-Kiamos I."/>
            <person name="Simpson M."/>
            <person name="Skupski M.P."/>
            <person name="Smith T.J."/>
            <person name="Spier E."/>
            <person name="Spradling A.C."/>
            <person name="Stapleton M."/>
            <person name="Strong R."/>
            <person name="Sun E."/>
            <person name="Svirskas R."/>
            <person name="Tector C."/>
            <person name="Turner R."/>
            <person name="Venter E."/>
            <person name="Wang A.H."/>
            <person name="Wang X."/>
            <person name="Wang Z.-Y."/>
            <person name="Wassarman D.A."/>
            <person name="Weinstock G.M."/>
            <person name="Weissenbach J."/>
            <person name="Williams S.M."/>
            <person name="Woodage T."/>
            <person name="Worley K.C."/>
            <person name="Wu D."/>
            <person name="Yang S."/>
            <person name="Yao Q.A."/>
            <person name="Ye J."/>
            <person name="Yeh R.-F."/>
            <person name="Zaveri J.S."/>
            <person name="Zhan M."/>
            <person name="Zhang G."/>
            <person name="Zhao Q."/>
            <person name="Zheng L."/>
            <person name="Zheng X.H."/>
            <person name="Zhong F.N."/>
            <person name="Zhong W."/>
            <person name="Zhou X."/>
            <person name="Zhu S.C."/>
            <person name="Zhu X."/>
            <person name="Smith H.O."/>
            <person name="Gibbs R.A."/>
            <person name="Myers E.W."/>
            <person name="Rubin G.M."/>
            <person name="Venter J.C."/>
        </authorList>
    </citation>
    <scope>NUCLEOTIDE SEQUENCE [LARGE SCALE GENOMIC DNA]</scope>
    <source>
        <strain evidence="8">Berkeley</strain>
    </source>
</reference>
<reference evidence="8" key="2">
    <citation type="journal article" date="2002" name="Genome Biol.">
        <title>Annotation of the Drosophila melanogaster euchromatic genome: a systematic review.</title>
        <authorList>
            <person name="Misra S."/>
            <person name="Crosby M.A."/>
            <person name="Mungall C.J."/>
            <person name="Matthews B.B."/>
            <person name="Campbell K.S."/>
            <person name="Hradecky P."/>
            <person name="Huang Y."/>
            <person name="Kaminker J.S."/>
            <person name="Millburn G.H."/>
            <person name="Prochnik S.E."/>
            <person name="Smith C.D."/>
            <person name="Tupy J.L."/>
            <person name="Whitfield E.J."/>
            <person name="Bayraktaroglu L."/>
            <person name="Berman B.P."/>
            <person name="Bettencourt B.R."/>
            <person name="Celniker S.E."/>
            <person name="de Grey A.D.N.J."/>
            <person name="Drysdale R.A."/>
            <person name="Harris N.L."/>
            <person name="Richter J."/>
            <person name="Russo S."/>
            <person name="Schroeder A.J."/>
            <person name="Shu S.Q."/>
            <person name="Stapleton M."/>
            <person name="Yamada C."/>
            <person name="Ashburner M."/>
            <person name="Gelbart W.M."/>
            <person name="Rubin G.M."/>
            <person name="Lewis S.E."/>
        </authorList>
    </citation>
    <scope>GENOME REANNOTATION</scope>
    <source>
        <strain evidence="8">Berkeley</strain>
    </source>
</reference>
<reference evidence="6" key="3">
    <citation type="journal article" date="2002" name="Genome Biol.">
        <title>A Drosophila full-length cDNA resource.</title>
        <authorList>
            <person name="Stapleton M."/>
            <person name="Carlson J.W."/>
            <person name="Brokstein P."/>
            <person name="Yu C."/>
            <person name="Champe M."/>
            <person name="George R.A."/>
            <person name="Guarin H."/>
            <person name="Kronmiller B."/>
            <person name="Pacleb J.M."/>
            <person name="Park S."/>
            <person name="Wan K.H."/>
            <person name="Rubin G.M."/>
            <person name="Celniker S.E."/>
        </authorList>
    </citation>
    <scope>NUCLEOTIDE SEQUENCE [LARGE SCALE MRNA]</scope>
    <source>
        <strain evidence="6">Berkeley</strain>
        <tissue evidence="6">Embryo</tissue>
    </source>
</reference>
<reference evidence="5" key="4">
    <citation type="journal article" date="2018" name="Elife">
        <title>A kinase-dependent feedforward loop affects CREBB stability and long term memory formation.</title>
        <authorList>
            <person name="Lee P.T."/>
            <person name="Lin G."/>
            <person name="Lin W.W."/>
            <person name="Diao F."/>
            <person name="White B.H."/>
            <person name="Bellen H.J."/>
        </authorList>
    </citation>
    <scope>FUNCTION</scope>
    <scope>CATALYTIC ACTIVITY</scope>
    <scope>COFACTOR</scope>
    <scope>ACTIVITY REGULATION</scope>
    <scope>TISSUE SPECIFICITY</scope>
    <scope>DEVELOPMENTAL STAGE</scope>
    <scope>DISRUPTION PHENOTYPE</scope>
    <scope>PHOSPHORYLATION AT SER-334</scope>
    <scope>MUTAGENESIS OF SER-334</scope>
</reference>
<comment type="function">
    <text evidence="3">Serine/threonine-protein kinase involved in memory formation. Together with the cAMP-dependent protein kinase A Pka-C1, promotes long-term memory (LTM) by regulating CrebB stability and activity. Involved in the maintenance of anesthesia-sensitive memory (ASM) which includes short-term memory (STM) and middle-term memory (MTM).</text>
</comment>
<comment type="catalytic activity">
    <reaction evidence="3">
        <text>L-seryl-[protein] + ATP = O-phospho-L-seryl-[protein] + ADP + H(+)</text>
        <dbReference type="Rhea" id="RHEA:17989"/>
        <dbReference type="Rhea" id="RHEA-COMP:9863"/>
        <dbReference type="Rhea" id="RHEA-COMP:11604"/>
        <dbReference type="ChEBI" id="CHEBI:15378"/>
        <dbReference type="ChEBI" id="CHEBI:29999"/>
        <dbReference type="ChEBI" id="CHEBI:30616"/>
        <dbReference type="ChEBI" id="CHEBI:83421"/>
        <dbReference type="ChEBI" id="CHEBI:456216"/>
        <dbReference type="EC" id="2.7.11.1"/>
    </reaction>
</comment>
<comment type="catalytic activity">
    <reaction evidence="3">
        <text>L-threonyl-[protein] + ATP = O-phospho-L-threonyl-[protein] + ADP + H(+)</text>
        <dbReference type="Rhea" id="RHEA:46608"/>
        <dbReference type="Rhea" id="RHEA-COMP:11060"/>
        <dbReference type="Rhea" id="RHEA-COMP:11605"/>
        <dbReference type="ChEBI" id="CHEBI:15378"/>
        <dbReference type="ChEBI" id="CHEBI:30013"/>
        <dbReference type="ChEBI" id="CHEBI:30616"/>
        <dbReference type="ChEBI" id="CHEBI:61977"/>
        <dbReference type="ChEBI" id="CHEBI:456216"/>
        <dbReference type="EC" id="2.7.11.1"/>
    </reaction>
</comment>
<comment type="cofactor">
    <cofactor evidence="3">
        <name>Mg(2+)</name>
        <dbReference type="ChEBI" id="CHEBI:18420"/>
    </cofactor>
</comment>
<comment type="activity regulation">
    <text evidence="3">Activated by Pka-C1-mediated phosphorylation of Ser-334.</text>
</comment>
<comment type="tissue specificity">
    <text evidence="3">Expressed in the mushroom bodies (at protein level).</text>
</comment>
<comment type="developmental stage">
    <text evidence="3">Expressed broadly in the third instar larvae and adult flies (at protein levels).</text>
</comment>
<comment type="disruption phenotype">
    <text evidence="3">Results in a decreased CrebB protein translation or stability in the brain. RNAi-mediated knockdown in the mushroom bodies results in a reduction of memory formation, including anesthesia-sensitive memory (ASM) and long-term memory (LTM) performance but not anesthesia-resistant memory (ARM) or learning ability.</text>
</comment>
<comment type="miscellaneous">
    <text evidence="4">Meng-Po is the Lady of Forgetfulness, a character in Chinese mythology, who ensures that people are ready for reincarnation by providing the 'Tea of Forgetfulness' that makes them loose the memories associated with their former life.</text>
</comment>
<comment type="similarity">
    <text evidence="1">Belongs to the protein kinase superfamily. Ser/Thr protein kinase family.</text>
</comment>